<proteinExistence type="inferred from homology"/>
<reference key="1">
    <citation type="journal article" date="2004" name="Science">
        <title>The Ashbya gossypii genome as a tool for mapping the ancient Saccharomyces cerevisiae genome.</title>
        <authorList>
            <person name="Dietrich F.S."/>
            <person name="Voegeli S."/>
            <person name="Brachat S."/>
            <person name="Lerch A."/>
            <person name="Gates K."/>
            <person name="Steiner S."/>
            <person name="Mohr C."/>
            <person name="Poehlmann R."/>
            <person name="Luedi P."/>
            <person name="Choi S."/>
            <person name="Wing R.A."/>
            <person name="Flavier A."/>
            <person name="Gaffney T.D."/>
            <person name="Philippsen P."/>
        </authorList>
    </citation>
    <scope>NUCLEOTIDE SEQUENCE [LARGE SCALE GENOMIC DNA]</scope>
    <source>
        <strain>ATCC 10895 / CBS 109.51 / FGSC 9923 / NRRL Y-1056</strain>
    </source>
</reference>
<reference key="2">
    <citation type="journal article" date="2013" name="G3 (Bethesda)">
        <title>Genomes of Ashbya fungi isolated from insects reveal four mating-type loci, numerous translocations, lack of transposons, and distinct gene duplications.</title>
        <authorList>
            <person name="Dietrich F.S."/>
            <person name="Voegeli S."/>
            <person name="Kuo S."/>
            <person name="Philippsen P."/>
        </authorList>
    </citation>
    <scope>GENOME REANNOTATION</scope>
    <source>
        <strain>ATCC 10895 / CBS 109.51 / FGSC 9923 / NRRL Y-1056</strain>
    </source>
</reference>
<name>GEP5_EREGS</name>
<evidence type="ECO:0000250" key="1"/>
<evidence type="ECO:0000305" key="2"/>
<dbReference type="EMBL" id="AE016820">
    <property type="protein sequence ID" value="AAS54571.1"/>
    <property type="molecule type" value="Genomic_DNA"/>
</dbReference>
<dbReference type="RefSeq" id="NP_986747.1">
    <property type="nucleotide sequence ID" value="NM_211809.1"/>
</dbReference>
<dbReference type="FunCoup" id="Q74ZX6">
    <property type="interactions" value="31"/>
</dbReference>
<dbReference type="EnsemblFungi" id="AAS54571">
    <property type="protein sequence ID" value="AAS54571"/>
    <property type="gene ID" value="AGOS_AGR082C"/>
</dbReference>
<dbReference type="GeneID" id="4623049"/>
<dbReference type="KEGG" id="ago:AGOS_AGR082C"/>
<dbReference type="eggNOG" id="ENOG502S2Q8">
    <property type="taxonomic scope" value="Eukaryota"/>
</dbReference>
<dbReference type="HOGENOM" id="CLU_079415_0_0_1"/>
<dbReference type="InParanoid" id="Q74ZX6"/>
<dbReference type="OMA" id="FWPYERH"/>
<dbReference type="OrthoDB" id="4066262at2759"/>
<dbReference type="Proteomes" id="UP000000591">
    <property type="component" value="Chromosome VII"/>
</dbReference>
<dbReference type="GO" id="GO:0005739">
    <property type="term" value="C:mitochondrion"/>
    <property type="evidence" value="ECO:0007669"/>
    <property type="project" value="UniProtKB-SubCell"/>
</dbReference>
<dbReference type="GO" id="GO:0000002">
    <property type="term" value="P:mitochondrial genome maintenance"/>
    <property type="evidence" value="ECO:0007669"/>
    <property type="project" value="InterPro"/>
</dbReference>
<dbReference type="InterPro" id="IPR031455">
    <property type="entry name" value="Gep5"/>
</dbReference>
<dbReference type="Pfam" id="PF17053">
    <property type="entry name" value="GEP5"/>
    <property type="match status" value="1"/>
</dbReference>
<accession>Q74ZX6</accession>
<protein>
    <recommendedName>
        <fullName>Genetic interactor of prohibitin 5, mitochondrial</fullName>
    </recommendedName>
    <alternativeName>
        <fullName>Required for respiratory growth protein 5</fullName>
    </alternativeName>
</protein>
<feature type="chain" id="PRO_0000399683" description="Genetic interactor of prohibitin 5, mitochondrial">
    <location>
        <begin position="1"/>
        <end position="266"/>
    </location>
</feature>
<keyword id="KW-0496">Mitochondrion</keyword>
<keyword id="KW-1185">Reference proteome</keyword>
<organism>
    <name type="scientific">Eremothecium gossypii (strain ATCC 10895 / CBS 109.51 / FGSC 9923 / NRRL Y-1056)</name>
    <name type="common">Yeast</name>
    <name type="synonym">Ashbya gossypii</name>
    <dbReference type="NCBI Taxonomy" id="284811"/>
    <lineage>
        <taxon>Eukaryota</taxon>
        <taxon>Fungi</taxon>
        <taxon>Dikarya</taxon>
        <taxon>Ascomycota</taxon>
        <taxon>Saccharomycotina</taxon>
        <taxon>Saccharomycetes</taxon>
        <taxon>Saccharomycetales</taxon>
        <taxon>Saccharomycetaceae</taxon>
        <taxon>Eremothecium</taxon>
    </lineage>
</organism>
<gene>
    <name type="primary">GEP5</name>
    <name type="synonym">RRG5</name>
    <name type="ordered locus">AGR082C</name>
</gene>
<sequence>MNEHIQRIVSRLPLHRATSEVILAYLSKQQAQYPTERIELVEPLNDFLRKGGHQGLQRLVFHVHFQLMLRAPEHLRLLRRHREELQRFWPYERHHSLLALSDVRSQSLRRLWEDGQEEVLQQMQYCRHHWLREGDVPERYALTQAQREEVLHRVFAQYMFLKQRPALWSVRRLPIPVVEIGMTPLGFDIPDVRVDGLFKDKTKSVLRLLYREHPALTPAAEEDMLRIIAECPTRAMRRIYLRACRRAYVLDADAQLFRVSRLRHFI</sequence>
<comment type="function">
    <text evidence="1">Essential for respiratory growth and required for maintenance of mtDNA. Required for cell survival in the absence of prohibitins (By similarity).</text>
</comment>
<comment type="subcellular location">
    <subcellularLocation>
        <location evidence="1">Mitochondrion</location>
    </subcellularLocation>
</comment>
<comment type="similarity">
    <text evidence="2">Belongs to the GEP5 family.</text>
</comment>